<gene>
    <name type="ordered locus">aq_1084</name>
</gene>
<accession>O67176</accession>
<dbReference type="EMBL" id="AE000657">
    <property type="protein sequence ID" value="AAC07139.1"/>
    <property type="molecule type" value="Genomic_DNA"/>
</dbReference>
<dbReference type="PIR" id="E70393">
    <property type="entry name" value="E70393"/>
</dbReference>
<dbReference type="RefSeq" id="NP_213739.1">
    <property type="nucleotide sequence ID" value="NC_000918.1"/>
</dbReference>
<dbReference type="RefSeq" id="WP_010880677.1">
    <property type="nucleotide sequence ID" value="NC_000918.1"/>
</dbReference>
<dbReference type="EnsemblBacteria" id="AAC07139">
    <property type="protein sequence ID" value="AAC07139"/>
    <property type="gene ID" value="aq_1084"/>
</dbReference>
<dbReference type="KEGG" id="aae:aq_1084"/>
<dbReference type="eggNOG" id="ENOG502ZTAQ">
    <property type="taxonomic scope" value="Bacteria"/>
</dbReference>
<dbReference type="HOGENOM" id="CLU_2021919_0_0_0"/>
<dbReference type="InParanoid" id="O67176"/>
<dbReference type="OrthoDB" id="10010073at2"/>
<dbReference type="Proteomes" id="UP000000798">
    <property type="component" value="Chromosome"/>
</dbReference>
<reference key="1">
    <citation type="journal article" date="1998" name="Nature">
        <title>The complete genome of the hyperthermophilic bacterium Aquifex aeolicus.</title>
        <authorList>
            <person name="Deckert G."/>
            <person name="Warren P.V."/>
            <person name="Gaasterland T."/>
            <person name="Young W.G."/>
            <person name="Lenox A.L."/>
            <person name="Graham D.E."/>
            <person name="Overbeek R."/>
            <person name="Snead M.A."/>
            <person name="Keller M."/>
            <person name="Aujay M."/>
            <person name="Huber R."/>
            <person name="Feldman R.A."/>
            <person name="Short J.M."/>
            <person name="Olsen G.J."/>
            <person name="Swanson R.V."/>
        </authorList>
    </citation>
    <scope>NUCLEOTIDE SEQUENCE [LARGE SCALE GENOMIC DNA]</scope>
    <source>
        <strain>VF5</strain>
    </source>
</reference>
<organism>
    <name type="scientific">Aquifex aeolicus (strain VF5)</name>
    <dbReference type="NCBI Taxonomy" id="224324"/>
    <lineage>
        <taxon>Bacteria</taxon>
        <taxon>Pseudomonadati</taxon>
        <taxon>Aquificota</taxon>
        <taxon>Aquificia</taxon>
        <taxon>Aquificales</taxon>
        <taxon>Aquificaceae</taxon>
        <taxon>Aquifex</taxon>
    </lineage>
</organism>
<sequence>MNLPDGTQLVVGRQLAKVKSNQNWIRIPEYKVRGNKVIISHLWVGSINMPRRPFWSFRELWEKHLGRKDAINVWSRIRSYNTQVLLKILELLEKEPETQAKKLVKRATMHQLRNIAESFEEL</sequence>
<keyword id="KW-1185">Reference proteome</keyword>
<feature type="chain" id="PRO_0000186900" description="Uncharacterized protein aq_1084">
    <location>
        <begin position="1"/>
        <end position="122"/>
    </location>
</feature>
<name>Y1084_AQUAE</name>
<proteinExistence type="predicted"/>
<protein>
    <recommendedName>
        <fullName>Uncharacterized protein aq_1084</fullName>
    </recommendedName>
</protein>